<accession>A9IK66</accession>
<feature type="chain" id="PRO_1000099092" description="GTPase Der">
    <location>
        <begin position="1"/>
        <end position="451"/>
    </location>
</feature>
<feature type="domain" description="EngA-type G 1">
    <location>
        <begin position="5"/>
        <end position="170"/>
    </location>
</feature>
<feature type="domain" description="EngA-type G 2">
    <location>
        <begin position="186"/>
        <end position="359"/>
    </location>
</feature>
<feature type="domain" description="KH-like" evidence="1">
    <location>
        <begin position="360"/>
        <end position="444"/>
    </location>
</feature>
<feature type="binding site" evidence="1">
    <location>
        <begin position="11"/>
        <end position="18"/>
    </location>
    <ligand>
        <name>GTP</name>
        <dbReference type="ChEBI" id="CHEBI:37565"/>
        <label>1</label>
    </ligand>
</feature>
<feature type="binding site" evidence="1">
    <location>
        <begin position="58"/>
        <end position="62"/>
    </location>
    <ligand>
        <name>GTP</name>
        <dbReference type="ChEBI" id="CHEBI:37565"/>
        <label>1</label>
    </ligand>
</feature>
<feature type="binding site" evidence="1">
    <location>
        <begin position="122"/>
        <end position="125"/>
    </location>
    <ligand>
        <name>GTP</name>
        <dbReference type="ChEBI" id="CHEBI:37565"/>
        <label>1</label>
    </ligand>
</feature>
<feature type="binding site" evidence="1">
    <location>
        <begin position="192"/>
        <end position="199"/>
    </location>
    <ligand>
        <name>GTP</name>
        <dbReference type="ChEBI" id="CHEBI:37565"/>
        <label>2</label>
    </ligand>
</feature>
<feature type="binding site" evidence="1">
    <location>
        <begin position="239"/>
        <end position="243"/>
    </location>
    <ligand>
        <name>GTP</name>
        <dbReference type="ChEBI" id="CHEBI:37565"/>
        <label>2</label>
    </ligand>
</feature>
<feature type="binding site" evidence="1">
    <location>
        <begin position="304"/>
        <end position="307"/>
    </location>
    <ligand>
        <name>GTP</name>
        <dbReference type="ChEBI" id="CHEBI:37565"/>
        <label>2</label>
    </ligand>
</feature>
<gene>
    <name evidence="1" type="primary">der</name>
    <name type="synonym">engA</name>
    <name type="ordered locus">Bpet2023</name>
</gene>
<comment type="function">
    <text evidence="1">GTPase that plays an essential role in the late steps of ribosome biogenesis.</text>
</comment>
<comment type="subunit">
    <text evidence="1">Associates with the 50S ribosomal subunit.</text>
</comment>
<comment type="similarity">
    <text evidence="1">Belongs to the TRAFAC class TrmE-Era-EngA-EngB-Septin-like GTPase superfamily. EngA (Der) GTPase family.</text>
</comment>
<protein>
    <recommendedName>
        <fullName evidence="1">GTPase Der</fullName>
    </recommendedName>
    <alternativeName>
        <fullName evidence="1">GTP-binding protein EngA</fullName>
    </alternativeName>
</protein>
<evidence type="ECO:0000255" key="1">
    <source>
        <dbReference type="HAMAP-Rule" id="MF_00195"/>
    </source>
</evidence>
<sequence length="451" mass="49566">MSFKPVVALVGRPNVGKSTLFNRLTRSRAALVADYSGLTRDRHYGEGRVGDTPFIVIDTGGFEPVAKTGILREMARQTRQAIAEADVVVFLVDARAGVNAHDHEIAQLLRKSGQQRVVLAVNKAEGMGVGNATSEFHELGLGTPYPISAAHGDGIVDLIGLALQDLVEPEPEPAPDAADLPPDHRIKLAIVGRPNVGKSTLINTLLGEERVIAFDLPGTTRDAIEIDFERDGRKYTLIDTAGLRRRGKVFEAVEKFSVIKTLQAIEASNVVLLMLDAQTEVSEQDAHIAGFVLETGRAVVVAINKWDGLDIDQRERIEREFRRKLRFLSFAPTHTISALKGQGIKPVLKSVVAAHAAAFAKLSTPKLTRELHAAVEQQPPPRKGIFRPKMRYAHQGGQNPPLVIIHGNALDAIPDSYRRYLETRFREAFKLDGTPLRIEFKSSRNPYTQES</sequence>
<organism>
    <name type="scientific">Bordetella petrii (strain ATCC BAA-461 / DSM 12804 / CCUG 43448)</name>
    <dbReference type="NCBI Taxonomy" id="340100"/>
    <lineage>
        <taxon>Bacteria</taxon>
        <taxon>Pseudomonadati</taxon>
        <taxon>Pseudomonadota</taxon>
        <taxon>Betaproteobacteria</taxon>
        <taxon>Burkholderiales</taxon>
        <taxon>Alcaligenaceae</taxon>
        <taxon>Bordetella</taxon>
    </lineage>
</organism>
<dbReference type="EMBL" id="AM902716">
    <property type="protein sequence ID" value="CAP42363.1"/>
    <property type="molecule type" value="Genomic_DNA"/>
</dbReference>
<dbReference type="SMR" id="A9IK66"/>
<dbReference type="STRING" id="94624.Bpet2023"/>
<dbReference type="KEGG" id="bpt:Bpet2023"/>
<dbReference type="eggNOG" id="COG1160">
    <property type="taxonomic scope" value="Bacteria"/>
</dbReference>
<dbReference type="Proteomes" id="UP000001225">
    <property type="component" value="Chromosome"/>
</dbReference>
<dbReference type="GO" id="GO:0016887">
    <property type="term" value="F:ATP hydrolysis activity"/>
    <property type="evidence" value="ECO:0007669"/>
    <property type="project" value="InterPro"/>
</dbReference>
<dbReference type="GO" id="GO:0005525">
    <property type="term" value="F:GTP binding"/>
    <property type="evidence" value="ECO:0007669"/>
    <property type="project" value="UniProtKB-UniRule"/>
</dbReference>
<dbReference type="GO" id="GO:0043022">
    <property type="term" value="F:ribosome binding"/>
    <property type="evidence" value="ECO:0007669"/>
    <property type="project" value="TreeGrafter"/>
</dbReference>
<dbReference type="GO" id="GO:0042254">
    <property type="term" value="P:ribosome biogenesis"/>
    <property type="evidence" value="ECO:0007669"/>
    <property type="project" value="UniProtKB-KW"/>
</dbReference>
<dbReference type="CDD" id="cd01894">
    <property type="entry name" value="EngA1"/>
    <property type="match status" value="1"/>
</dbReference>
<dbReference type="CDD" id="cd01895">
    <property type="entry name" value="EngA2"/>
    <property type="match status" value="1"/>
</dbReference>
<dbReference type="FunFam" id="3.30.300.20:FF:000004">
    <property type="entry name" value="GTPase Der"/>
    <property type="match status" value="1"/>
</dbReference>
<dbReference type="FunFam" id="3.40.50.300:FF:000040">
    <property type="entry name" value="GTPase Der"/>
    <property type="match status" value="1"/>
</dbReference>
<dbReference type="FunFam" id="3.40.50.300:FF:000057">
    <property type="entry name" value="GTPase Der"/>
    <property type="match status" value="1"/>
</dbReference>
<dbReference type="Gene3D" id="3.30.300.20">
    <property type="match status" value="1"/>
</dbReference>
<dbReference type="Gene3D" id="3.40.50.300">
    <property type="entry name" value="P-loop containing nucleotide triphosphate hydrolases"/>
    <property type="match status" value="2"/>
</dbReference>
<dbReference type="HAMAP" id="MF_00195">
    <property type="entry name" value="GTPase_Der"/>
    <property type="match status" value="1"/>
</dbReference>
<dbReference type="InterPro" id="IPR003593">
    <property type="entry name" value="AAA+_ATPase"/>
</dbReference>
<dbReference type="InterPro" id="IPR031166">
    <property type="entry name" value="G_ENGA"/>
</dbReference>
<dbReference type="InterPro" id="IPR006073">
    <property type="entry name" value="GTP-bd"/>
</dbReference>
<dbReference type="InterPro" id="IPR016484">
    <property type="entry name" value="GTPase_Der"/>
</dbReference>
<dbReference type="InterPro" id="IPR032859">
    <property type="entry name" value="KH_dom-like"/>
</dbReference>
<dbReference type="InterPro" id="IPR015946">
    <property type="entry name" value="KH_dom-like_a/b"/>
</dbReference>
<dbReference type="InterPro" id="IPR027417">
    <property type="entry name" value="P-loop_NTPase"/>
</dbReference>
<dbReference type="InterPro" id="IPR005225">
    <property type="entry name" value="Small_GTP-bd"/>
</dbReference>
<dbReference type="NCBIfam" id="TIGR03594">
    <property type="entry name" value="GTPase_EngA"/>
    <property type="match status" value="1"/>
</dbReference>
<dbReference type="NCBIfam" id="TIGR00231">
    <property type="entry name" value="small_GTP"/>
    <property type="match status" value="2"/>
</dbReference>
<dbReference type="PANTHER" id="PTHR43834">
    <property type="entry name" value="GTPASE DER"/>
    <property type="match status" value="1"/>
</dbReference>
<dbReference type="PANTHER" id="PTHR43834:SF6">
    <property type="entry name" value="GTPASE DER"/>
    <property type="match status" value="1"/>
</dbReference>
<dbReference type="Pfam" id="PF14714">
    <property type="entry name" value="KH_dom-like"/>
    <property type="match status" value="1"/>
</dbReference>
<dbReference type="Pfam" id="PF01926">
    <property type="entry name" value="MMR_HSR1"/>
    <property type="match status" value="2"/>
</dbReference>
<dbReference type="PIRSF" id="PIRSF006485">
    <property type="entry name" value="GTP-binding_EngA"/>
    <property type="match status" value="1"/>
</dbReference>
<dbReference type="PRINTS" id="PR00326">
    <property type="entry name" value="GTP1OBG"/>
</dbReference>
<dbReference type="SMART" id="SM00382">
    <property type="entry name" value="AAA"/>
    <property type="match status" value="2"/>
</dbReference>
<dbReference type="SUPFAM" id="SSF52540">
    <property type="entry name" value="P-loop containing nucleoside triphosphate hydrolases"/>
    <property type="match status" value="2"/>
</dbReference>
<dbReference type="PROSITE" id="PS51712">
    <property type="entry name" value="G_ENGA"/>
    <property type="match status" value="2"/>
</dbReference>
<reference key="1">
    <citation type="journal article" date="2008" name="BMC Genomics">
        <title>The missing link: Bordetella petrii is endowed with both the metabolic versatility of environmental bacteria and virulence traits of pathogenic Bordetellae.</title>
        <authorList>
            <person name="Gross R."/>
            <person name="Guzman C.A."/>
            <person name="Sebaihia M."/>
            <person name="Martin dos Santos V.A.P."/>
            <person name="Pieper D.H."/>
            <person name="Koebnik R."/>
            <person name="Lechner M."/>
            <person name="Bartels D."/>
            <person name="Buhrmester J."/>
            <person name="Choudhuri J.V."/>
            <person name="Ebensen T."/>
            <person name="Gaigalat L."/>
            <person name="Herrmann S."/>
            <person name="Khachane A.N."/>
            <person name="Larisch C."/>
            <person name="Link S."/>
            <person name="Linke B."/>
            <person name="Meyer F."/>
            <person name="Mormann S."/>
            <person name="Nakunst D."/>
            <person name="Rueckert C."/>
            <person name="Schneiker-Bekel S."/>
            <person name="Schulze K."/>
            <person name="Voerholter F.-J."/>
            <person name="Yevsa T."/>
            <person name="Engle J.T."/>
            <person name="Goldman W.E."/>
            <person name="Puehler A."/>
            <person name="Goebel U.B."/>
            <person name="Goesmann A."/>
            <person name="Bloecker H."/>
            <person name="Kaiser O."/>
            <person name="Martinez-Arias R."/>
        </authorList>
    </citation>
    <scope>NUCLEOTIDE SEQUENCE [LARGE SCALE GENOMIC DNA]</scope>
    <source>
        <strain>ATCC BAA-461 / DSM 12804 / CCUG 43448</strain>
    </source>
</reference>
<name>DER_BORPD</name>
<proteinExistence type="inferred from homology"/>
<keyword id="KW-0342">GTP-binding</keyword>
<keyword id="KW-0547">Nucleotide-binding</keyword>
<keyword id="KW-0677">Repeat</keyword>
<keyword id="KW-0690">Ribosome biogenesis</keyword>